<reference key="1">
    <citation type="submission" date="2000-03" db="EMBL/GenBank/DDBJ databases">
        <title>Schizophyllum commune rho3-expression is elevated during mating interaction.</title>
        <authorList>
            <person name="Gorfer M."/>
            <person name="Uuskallio M."/>
            <person name="Raudaskoski M."/>
        </authorList>
    </citation>
    <scope>NUCLEOTIDE SEQUENCE [MRNA]</scope>
</reference>
<name>RHO3_SCHCO</name>
<dbReference type="EMBL" id="AF242543">
    <property type="protein sequence ID" value="AAF61254.1"/>
    <property type="molecule type" value="mRNA"/>
</dbReference>
<dbReference type="SMR" id="Q9P8J9"/>
<dbReference type="VEuPathDB" id="FungiDB:SCHCODRAFT_02618270"/>
<dbReference type="GO" id="GO:0005886">
    <property type="term" value="C:plasma membrane"/>
    <property type="evidence" value="ECO:0007669"/>
    <property type="project" value="UniProtKB-SubCell"/>
</dbReference>
<dbReference type="GO" id="GO:0005525">
    <property type="term" value="F:GTP binding"/>
    <property type="evidence" value="ECO:0007669"/>
    <property type="project" value="UniProtKB-KW"/>
</dbReference>
<dbReference type="GO" id="GO:0003924">
    <property type="term" value="F:GTPase activity"/>
    <property type="evidence" value="ECO:0007669"/>
    <property type="project" value="InterPro"/>
</dbReference>
<dbReference type="GO" id="GO:0007264">
    <property type="term" value="P:small GTPase-mediated signal transduction"/>
    <property type="evidence" value="ECO:0007669"/>
    <property type="project" value="InterPro"/>
</dbReference>
<dbReference type="CDD" id="cd04134">
    <property type="entry name" value="Rho3"/>
    <property type="match status" value="1"/>
</dbReference>
<dbReference type="FunFam" id="3.40.50.300:FF:000780">
    <property type="entry name" value="Rho GTPase Rho3"/>
    <property type="match status" value="1"/>
</dbReference>
<dbReference type="Gene3D" id="3.40.50.300">
    <property type="entry name" value="P-loop containing nucleotide triphosphate hydrolases"/>
    <property type="match status" value="1"/>
</dbReference>
<dbReference type="InterPro" id="IPR027417">
    <property type="entry name" value="P-loop_NTPase"/>
</dbReference>
<dbReference type="InterPro" id="IPR005225">
    <property type="entry name" value="Small_GTP-bd"/>
</dbReference>
<dbReference type="InterPro" id="IPR001806">
    <property type="entry name" value="Small_GTPase"/>
</dbReference>
<dbReference type="InterPro" id="IPR003578">
    <property type="entry name" value="Small_GTPase_Rho"/>
</dbReference>
<dbReference type="NCBIfam" id="TIGR00231">
    <property type="entry name" value="small_GTP"/>
    <property type="match status" value="1"/>
</dbReference>
<dbReference type="PANTHER" id="PTHR24072">
    <property type="entry name" value="RHO FAMILY GTPASE"/>
    <property type="match status" value="1"/>
</dbReference>
<dbReference type="Pfam" id="PF00071">
    <property type="entry name" value="Ras"/>
    <property type="match status" value="1"/>
</dbReference>
<dbReference type="PRINTS" id="PR00449">
    <property type="entry name" value="RASTRNSFRMNG"/>
</dbReference>
<dbReference type="SMART" id="SM00175">
    <property type="entry name" value="RAB"/>
    <property type="match status" value="1"/>
</dbReference>
<dbReference type="SMART" id="SM00173">
    <property type="entry name" value="RAS"/>
    <property type="match status" value="1"/>
</dbReference>
<dbReference type="SMART" id="SM00174">
    <property type="entry name" value="RHO"/>
    <property type="match status" value="1"/>
</dbReference>
<dbReference type="SUPFAM" id="SSF52540">
    <property type="entry name" value="P-loop containing nucleoside triphosphate hydrolases"/>
    <property type="match status" value="1"/>
</dbReference>
<dbReference type="PROSITE" id="PS51420">
    <property type="entry name" value="RHO"/>
    <property type="match status" value="1"/>
</dbReference>
<organism>
    <name type="scientific">Schizophyllum commune</name>
    <name type="common">Split gill fungus</name>
    <dbReference type="NCBI Taxonomy" id="5334"/>
    <lineage>
        <taxon>Eukaryota</taxon>
        <taxon>Fungi</taxon>
        <taxon>Dikarya</taxon>
        <taxon>Basidiomycota</taxon>
        <taxon>Agaricomycotina</taxon>
        <taxon>Agaricomycetes</taxon>
        <taxon>Agaricomycetidae</taxon>
        <taxon>Agaricales</taxon>
        <taxon>Schizophyllaceae</taxon>
        <taxon>Schizophyllum</taxon>
    </lineage>
</organism>
<proteinExistence type="evidence at transcript level"/>
<gene>
    <name type="primary">RHO3</name>
</gene>
<evidence type="ECO:0000250" key="1">
    <source>
        <dbReference type="UniProtKB" id="P20171"/>
    </source>
</evidence>
<evidence type="ECO:0000250" key="2">
    <source>
        <dbReference type="UniProtKB" id="P61586"/>
    </source>
</evidence>
<evidence type="ECO:0000250" key="3">
    <source>
        <dbReference type="UniProtKB" id="P62745"/>
    </source>
</evidence>
<evidence type="ECO:0000305" key="4"/>
<protein>
    <recommendedName>
        <fullName>GTP-binding protein Rho3</fullName>
    </recommendedName>
</protein>
<sequence>MALCGSSKGRGRGRPIQRKVVVCGDGACGKTSLLNVFTRGFFTQVYEPTVFENYVHDLYIDDQLVELSLWDTAGQEEFDRLRSLSYAETHVIMICFSVDNPTSLENVESKWLDEILEYCPGVKLVLVDSKCDLRDDPAVLDRLQRYGTHTDQYEEGLGVARRIRASRYLECSSKHNRGVNEVFLRGRARVTVHSIRQGSAGSCCVM</sequence>
<feature type="chain" id="PRO_0000198939" description="GTP-binding protein Rho3">
    <location>
        <begin position="1"/>
        <end position="203"/>
    </location>
</feature>
<feature type="propeptide" id="PRO_0000281269" description="Removed in mature form" evidence="3">
    <location>
        <begin position="204"/>
        <end position="206"/>
    </location>
</feature>
<feature type="short sequence motif" description="Effector region">
    <location>
        <begin position="46"/>
        <end position="54"/>
    </location>
</feature>
<feature type="binding site" evidence="2">
    <location>
        <begin position="24"/>
        <end position="31"/>
    </location>
    <ligand>
        <name>GTP</name>
        <dbReference type="ChEBI" id="CHEBI:37565"/>
    </ligand>
</feature>
<feature type="binding site" evidence="1">
    <location>
        <begin position="71"/>
        <end position="75"/>
    </location>
    <ligand>
        <name>GTP</name>
        <dbReference type="ChEBI" id="CHEBI:37565"/>
    </ligand>
</feature>
<feature type="binding site" evidence="2">
    <location>
        <begin position="129"/>
        <end position="132"/>
    </location>
    <ligand>
        <name>GTP</name>
        <dbReference type="ChEBI" id="CHEBI:37565"/>
    </ligand>
</feature>
<feature type="modified residue" description="Cysteine methyl ester" evidence="3">
    <location>
        <position position="203"/>
    </location>
</feature>
<feature type="lipid moiety-binding region" description="S-geranylgeranyl cysteine" evidence="3">
    <location>
        <position position="203"/>
    </location>
</feature>
<comment type="subcellular location">
    <subcellularLocation>
        <location evidence="4">Cell membrane</location>
        <topology evidence="4">Lipid-anchor</topology>
        <orientation evidence="4">Cytoplasmic side</orientation>
    </subcellularLocation>
</comment>
<comment type="similarity">
    <text evidence="4">Belongs to the small GTPase superfamily. Rho family.</text>
</comment>
<accession>Q9P8J9</accession>
<keyword id="KW-1003">Cell membrane</keyword>
<keyword id="KW-0342">GTP-binding</keyword>
<keyword id="KW-0449">Lipoprotein</keyword>
<keyword id="KW-0472">Membrane</keyword>
<keyword id="KW-0488">Methylation</keyword>
<keyword id="KW-0547">Nucleotide-binding</keyword>
<keyword id="KW-0636">Prenylation</keyword>